<sequence>MSTQLRAAEISDIIESRIEKFGIKAEERTEGTILNIKDGIVRVYGLRDVMFGEMVEFPENTYGLAFNLERDSVGAVVMGPYEHLEEGMTARCTGRILEVPVGEALLGRVVDGLGKPIDGKGPIDTSETSPIEKVAPGVITRKSVDTSLPTGLKSIDAMVPIGRGQRELIIGDRQTGKTAIAIDTIINQKHTGVKCIYVAIGQKQSSVAAVVRKLEEHGAMEHTIVVNASASEAAALQYLAPYAGCTMGEYFRDRGQDALIVYDDLTKQAWAYRQISLLLRRPPGREAYPGDIFYLHSRLLERAAHVNEAYVKEFTKGKVTGKTGSLTALPIIETQAGDVSAFIPTNVISITDGQIYLDVNLFNAGIRPAINAGLSVSRVGGAAQTKIIKKLIGGLRIALAQYRELEAFSQFASDLDEATRKQLEHGQRVMEILKQPQYQPLSVGEMAIIWYVVNNNYLDQVELKKVVDFERSLLSFLRDQHQDLLDEINKNPNYSEKIIEKIKAVVEEFVKTQSY</sequence>
<name>ATPA_COXB1</name>
<gene>
    <name evidence="1" type="primary">atpA</name>
    <name type="ordered locus">CbuK_0051</name>
</gene>
<keyword id="KW-0066">ATP synthesis</keyword>
<keyword id="KW-0067">ATP-binding</keyword>
<keyword id="KW-0997">Cell inner membrane</keyword>
<keyword id="KW-1003">Cell membrane</keyword>
<keyword id="KW-0139">CF(1)</keyword>
<keyword id="KW-0375">Hydrogen ion transport</keyword>
<keyword id="KW-0406">Ion transport</keyword>
<keyword id="KW-0472">Membrane</keyword>
<keyword id="KW-0547">Nucleotide-binding</keyword>
<keyword id="KW-1278">Translocase</keyword>
<keyword id="KW-0813">Transport</keyword>
<dbReference type="EC" id="7.1.2.2" evidence="1"/>
<dbReference type="EMBL" id="CP001020">
    <property type="protein sequence ID" value="ACJ19378.1"/>
    <property type="molecule type" value="Genomic_DNA"/>
</dbReference>
<dbReference type="RefSeq" id="WP_005770035.1">
    <property type="nucleotide sequence ID" value="NC_011528.1"/>
</dbReference>
<dbReference type="SMR" id="B6J961"/>
<dbReference type="KEGG" id="cbc:CbuK_0051"/>
<dbReference type="HOGENOM" id="CLU_010091_2_1_6"/>
<dbReference type="GO" id="GO:0005886">
    <property type="term" value="C:plasma membrane"/>
    <property type="evidence" value="ECO:0007669"/>
    <property type="project" value="UniProtKB-SubCell"/>
</dbReference>
<dbReference type="GO" id="GO:0045259">
    <property type="term" value="C:proton-transporting ATP synthase complex"/>
    <property type="evidence" value="ECO:0007669"/>
    <property type="project" value="UniProtKB-KW"/>
</dbReference>
<dbReference type="GO" id="GO:0043531">
    <property type="term" value="F:ADP binding"/>
    <property type="evidence" value="ECO:0007669"/>
    <property type="project" value="TreeGrafter"/>
</dbReference>
<dbReference type="GO" id="GO:0005524">
    <property type="term" value="F:ATP binding"/>
    <property type="evidence" value="ECO:0007669"/>
    <property type="project" value="UniProtKB-UniRule"/>
</dbReference>
<dbReference type="GO" id="GO:0046933">
    <property type="term" value="F:proton-transporting ATP synthase activity, rotational mechanism"/>
    <property type="evidence" value="ECO:0007669"/>
    <property type="project" value="UniProtKB-UniRule"/>
</dbReference>
<dbReference type="CDD" id="cd18113">
    <property type="entry name" value="ATP-synt_F1_alpha_C"/>
    <property type="match status" value="1"/>
</dbReference>
<dbReference type="CDD" id="cd18116">
    <property type="entry name" value="ATP-synt_F1_alpha_N"/>
    <property type="match status" value="1"/>
</dbReference>
<dbReference type="CDD" id="cd01132">
    <property type="entry name" value="F1-ATPase_alpha_CD"/>
    <property type="match status" value="1"/>
</dbReference>
<dbReference type="FunFam" id="1.20.150.20:FF:000001">
    <property type="entry name" value="ATP synthase subunit alpha"/>
    <property type="match status" value="1"/>
</dbReference>
<dbReference type="FunFam" id="2.40.30.20:FF:000001">
    <property type="entry name" value="ATP synthase subunit alpha"/>
    <property type="match status" value="1"/>
</dbReference>
<dbReference type="FunFam" id="3.40.50.300:FF:000002">
    <property type="entry name" value="ATP synthase subunit alpha"/>
    <property type="match status" value="1"/>
</dbReference>
<dbReference type="Gene3D" id="2.40.30.20">
    <property type="match status" value="1"/>
</dbReference>
<dbReference type="Gene3D" id="1.20.150.20">
    <property type="entry name" value="ATP synthase alpha/beta chain, C-terminal domain"/>
    <property type="match status" value="1"/>
</dbReference>
<dbReference type="Gene3D" id="3.40.50.300">
    <property type="entry name" value="P-loop containing nucleotide triphosphate hydrolases"/>
    <property type="match status" value="1"/>
</dbReference>
<dbReference type="HAMAP" id="MF_01346">
    <property type="entry name" value="ATP_synth_alpha_bact"/>
    <property type="match status" value="1"/>
</dbReference>
<dbReference type="InterPro" id="IPR023366">
    <property type="entry name" value="ATP_synth_asu-like_sf"/>
</dbReference>
<dbReference type="InterPro" id="IPR000793">
    <property type="entry name" value="ATP_synth_asu_C"/>
</dbReference>
<dbReference type="InterPro" id="IPR038376">
    <property type="entry name" value="ATP_synth_asu_C_sf"/>
</dbReference>
<dbReference type="InterPro" id="IPR033732">
    <property type="entry name" value="ATP_synth_F1_a_nt-bd_dom"/>
</dbReference>
<dbReference type="InterPro" id="IPR005294">
    <property type="entry name" value="ATP_synth_F1_asu"/>
</dbReference>
<dbReference type="InterPro" id="IPR020003">
    <property type="entry name" value="ATPase_a/bsu_AS"/>
</dbReference>
<dbReference type="InterPro" id="IPR004100">
    <property type="entry name" value="ATPase_F1/V1/A1_a/bsu_N"/>
</dbReference>
<dbReference type="InterPro" id="IPR036121">
    <property type="entry name" value="ATPase_F1/V1/A1_a/bsu_N_sf"/>
</dbReference>
<dbReference type="InterPro" id="IPR000194">
    <property type="entry name" value="ATPase_F1/V1/A1_a/bsu_nucl-bd"/>
</dbReference>
<dbReference type="InterPro" id="IPR027417">
    <property type="entry name" value="P-loop_NTPase"/>
</dbReference>
<dbReference type="NCBIfam" id="TIGR00962">
    <property type="entry name" value="atpA"/>
    <property type="match status" value="1"/>
</dbReference>
<dbReference type="NCBIfam" id="NF009884">
    <property type="entry name" value="PRK13343.1"/>
    <property type="match status" value="1"/>
</dbReference>
<dbReference type="PANTHER" id="PTHR48082">
    <property type="entry name" value="ATP SYNTHASE SUBUNIT ALPHA, MITOCHONDRIAL"/>
    <property type="match status" value="1"/>
</dbReference>
<dbReference type="PANTHER" id="PTHR48082:SF2">
    <property type="entry name" value="ATP SYNTHASE SUBUNIT ALPHA, MITOCHONDRIAL"/>
    <property type="match status" value="1"/>
</dbReference>
<dbReference type="Pfam" id="PF00006">
    <property type="entry name" value="ATP-synt_ab"/>
    <property type="match status" value="1"/>
</dbReference>
<dbReference type="Pfam" id="PF00306">
    <property type="entry name" value="ATP-synt_ab_C"/>
    <property type="match status" value="1"/>
</dbReference>
<dbReference type="Pfam" id="PF02874">
    <property type="entry name" value="ATP-synt_ab_N"/>
    <property type="match status" value="1"/>
</dbReference>
<dbReference type="PIRSF" id="PIRSF039088">
    <property type="entry name" value="F_ATPase_subunit_alpha"/>
    <property type="match status" value="1"/>
</dbReference>
<dbReference type="SUPFAM" id="SSF47917">
    <property type="entry name" value="C-terminal domain of alpha and beta subunits of F1 ATP synthase"/>
    <property type="match status" value="1"/>
</dbReference>
<dbReference type="SUPFAM" id="SSF50615">
    <property type="entry name" value="N-terminal domain of alpha and beta subunits of F1 ATP synthase"/>
    <property type="match status" value="1"/>
</dbReference>
<dbReference type="SUPFAM" id="SSF52540">
    <property type="entry name" value="P-loop containing nucleoside triphosphate hydrolases"/>
    <property type="match status" value="1"/>
</dbReference>
<dbReference type="PROSITE" id="PS00152">
    <property type="entry name" value="ATPASE_ALPHA_BETA"/>
    <property type="match status" value="1"/>
</dbReference>
<proteinExistence type="inferred from homology"/>
<evidence type="ECO:0000255" key="1">
    <source>
        <dbReference type="HAMAP-Rule" id="MF_01346"/>
    </source>
</evidence>
<organism>
    <name type="scientific">Coxiella burnetii (strain CbuK_Q154)</name>
    <name type="common">Coxiella burnetii (strain Q154)</name>
    <dbReference type="NCBI Taxonomy" id="434924"/>
    <lineage>
        <taxon>Bacteria</taxon>
        <taxon>Pseudomonadati</taxon>
        <taxon>Pseudomonadota</taxon>
        <taxon>Gammaproteobacteria</taxon>
        <taxon>Legionellales</taxon>
        <taxon>Coxiellaceae</taxon>
        <taxon>Coxiella</taxon>
    </lineage>
</organism>
<accession>B6J961</accession>
<protein>
    <recommendedName>
        <fullName evidence="1">ATP synthase subunit alpha</fullName>
        <ecNumber evidence="1">7.1.2.2</ecNumber>
    </recommendedName>
    <alternativeName>
        <fullName evidence="1">ATP synthase F1 sector subunit alpha</fullName>
    </alternativeName>
    <alternativeName>
        <fullName evidence="1">F-ATPase subunit alpha</fullName>
    </alternativeName>
</protein>
<reference key="1">
    <citation type="journal article" date="2009" name="Infect. Immun.">
        <title>Comparative genomics reveal extensive transposon-mediated genomic plasticity and diversity among potential effector proteins within the genus Coxiella.</title>
        <authorList>
            <person name="Beare P.A."/>
            <person name="Unsworth N."/>
            <person name="Andoh M."/>
            <person name="Voth D.E."/>
            <person name="Omsland A."/>
            <person name="Gilk S.D."/>
            <person name="Williams K.P."/>
            <person name="Sobral B.W."/>
            <person name="Kupko J.J. III"/>
            <person name="Porcella S.F."/>
            <person name="Samuel J.E."/>
            <person name="Heinzen R.A."/>
        </authorList>
    </citation>
    <scope>NUCLEOTIDE SEQUENCE [LARGE SCALE GENOMIC DNA]</scope>
    <source>
        <strain>CbuK_Q154</strain>
    </source>
</reference>
<comment type="function">
    <text evidence="1">Produces ATP from ADP in the presence of a proton gradient across the membrane. The alpha chain is a regulatory subunit.</text>
</comment>
<comment type="catalytic activity">
    <reaction evidence="1">
        <text>ATP + H2O + 4 H(+)(in) = ADP + phosphate + 5 H(+)(out)</text>
        <dbReference type="Rhea" id="RHEA:57720"/>
        <dbReference type="ChEBI" id="CHEBI:15377"/>
        <dbReference type="ChEBI" id="CHEBI:15378"/>
        <dbReference type="ChEBI" id="CHEBI:30616"/>
        <dbReference type="ChEBI" id="CHEBI:43474"/>
        <dbReference type="ChEBI" id="CHEBI:456216"/>
        <dbReference type="EC" id="7.1.2.2"/>
    </reaction>
</comment>
<comment type="subunit">
    <text evidence="1">F-type ATPases have 2 components, CF(1) - the catalytic core - and CF(0) - the membrane proton channel. CF(1) has five subunits: alpha(3), beta(3), gamma(1), delta(1), epsilon(1). CF(0) has three main subunits: a(1), b(2) and c(9-12). The alpha and beta chains form an alternating ring which encloses part of the gamma chain. CF(1) is attached to CF(0) by a central stalk formed by the gamma and epsilon chains, while a peripheral stalk is formed by the delta and b chains.</text>
</comment>
<comment type="subcellular location">
    <subcellularLocation>
        <location evidence="1">Cell inner membrane</location>
        <topology evidence="1">Peripheral membrane protein</topology>
    </subcellularLocation>
</comment>
<comment type="similarity">
    <text evidence="1">Belongs to the ATPase alpha/beta chains family.</text>
</comment>
<feature type="chain" id="PRO_1000143361" description="ATP synthase subunit alpha">
    <location>
        <begin position="1"/>
        <end position="515"/>
    </location>
</feature>
<feature type="binding site" evidence="1">
    <location>
        <begin position="171"/>
        <end position="178"/>
    </location>
    <ligand>
        <name>ATP</name>
        <dbReference type="ChEBI" id="CHEBI:30616"/>
    </ligand>
</feature>
<feature type="site" description="Required for activity" evidence="1">
    <location>
        <position position="375"/>
    </location>
</feature>